<reference key="1">
    <citation type="journal article" date="2010" name="Science">
        <title>The genome of the Western clawed frog Xenopus tropicalis.</title>
        <authorList>
            <person name="Hellsten U."/>
            <person name="Harland R.M."/>
            <person name="Gilchrist M.J."/>
            <person name="Hendrix D."/>
            <person name="Jurka J."/>
            <person name="Kapitonov V."/>
            <person name="Ovcharenko I."/>
            <person name="Putnam N.H."/>
            <person name="Shu S."/>
            <person name="Taher L."/>
            <person name="Blitz I.L."/>
            <person name="Blumberg B."/>
            <person name="Dichmann D.S."/>
            <person name="Dubchak I."/>
            <person name="Amaya E."/>
            <person name="Detter J.C."/>
            <person name="Fletcher R."/>
            <person name="Gerhard D.S."/>
            <person name="Goodstein D."/>
            <person name="Graves T."/>
            <person name="Grigoriev I.V."/>
            <person name="Grimwood J."/>
            <person name="Kawashima T."/>
            <person name="Lindquist E."/>
            <person name="Lucas S.M."/>
            <person name="Mead P.E."/>
            <person name="Mitros T."/>
            <person name="Ogino H."/>
            <person name="Ohta Y."/>
            <person name="Poliakov A.V."/>
            <person name="Pollet N."/>
            <person name="Robert J."/>
            <person name="Salamov A."/>
            <person name="Sater A.K."/>
            <person name="Schmutz J."/>
            <person name="Terry A."/>
            <person name="Vize P.D."/>
            <person name="Warren W.C."/>
            <person name="Wells D."/>
            <person name="Wills A."/>
            <person name="Wilson R.K."/>
            <person name="Zimmerman L.B."/>
            <person name="Zorn A.M."/>
            <person name="Grainger R."/>
            <person name="Grammer T."/>
            <person name="Khokha M.K."/>
            <person name="Richardson P.M."/>
            <person name="Rokhsar D.S."/>
        </authorList>
    </citation>
    <scope>NUCLEOTIDE SEQUENCE [LARGE SCALE GENOMIC DNA]</scope>
</reference>
<reference key="2">
    <citation type="submission" date="2006-09" db="EMBL/GenBank/DDBJ databases">
        <authorList>
            <consortium name="NIH - Xenopus Gene Collection (XGC) project"/>
        </authorList>
    </citation>
    <scope>NUCLEOTIDE SEQUENCE [LARGE SCALE MRNA]</scope>
    <source>
        <tissue>Testis</tissue>
    </source>
</reference>
<feature type="chain" id="PRO_0000414715" description="Serine/threonine-protein kinase 10">
    <location>
        <begin position="1"/>
        <end position="951"/>
    </location>
</feature>
<feature type="domain" description="Protein kinase" evidence="3">
    <location>
        <begin position="36"/>
        <end position="294"/>
    </location>
</feature>
<feature type="region of interest" description="Disordered" evidence="5">
    <location>
        <begin position="319"/>
        <end position="479"/>
    </location>
</feature>
<feature type="region of interest" description="Disordered" evidence="5">
    <location>
        <begin position="785"/>
        <end position="804"/>
    </location>
</feature>
<feature type="region of interest" description="Disordered" evidence="5">
    <location>
        <begin position="930"/>
        <end position="951"/>
    </location>
</feature>
<feature type="coiled-coil region" evidence="2">
    <location>
        <begin position="583"/>
        <end position="723"/>
    </location>
</feature>
<feature type="coiled-coil region" evidence="2">
    <location>
        <begin position="898"/>
        <end position="928"/>
    </location>
</feature>
<feature type="compositionally biased region" description="Acidic residues" evidence="5">
    <location>
        <begin position="319"/>
        <end position="330"/>
    </location>
</feature>
<feature type="compositionally biased region" description="Polar residues" evidence="5">
    <location>
        <begin position="331"/>
        <end position="343"/>
    </location>
</feature>
<feature type="compositionally biased region" description="Basic and acidic residues" evidence="5">
    <location>
        <begin position="345"/>
        <end position="356"/>
    </location>
</feature>
<feature type="compositionally biased region" description="Polar residues" evidence="5">
    <location>
        <begin position="364"/>
        <end position="373"/>
    </location>
</feature>
<feature type="compositionally biased region" description="Basic and acidic residues" evidence="5">
    <location>
        <begin position="374"/>
        <end position="394"/>
    </location>
</feature>
<feature type="compositionally biased region" description="Basic and acidic residues" evidence="5">
    <location>
        <begin position="410"/>
        <end position="427"/>
    </location>
</feature>
<feature type="compositionally biased region" description="Polar residues" evidence="5">
    <location>
        <begin position="429"/>
        <end position="443"/>
    </location>
</feature>
<feature type="compositionally biased region" description="Basic and acidic residues" evidence="5">
    <location>
        <begin position="785"/>
        <end position="800"/>
    </location>
</feature>
<feature type="active site" description="Proton acceptor" evidence="3 4">
    <location>
        <position position="157"/>
    </location>
</feature>
<feature type="binding site" evidence="3">
    <location>
        <begin position="42"/>
        <end position="50"/>
    </location>
    <ligand>
        <name>ATP</name>
        <dbReference type="ChEBI" id="CHEBI:30616"/>
    </ligand>
</feature>
<feature type="binding site" evidence="3">
    <location>
        <position position="65"/>
    </location>
    <ligand>
        <name>ATP</name>
        <dbReference type="ChEBI" id="CHEBI:30616"/>
    </ligand>
</feature>
<feature type="modified residue" description="Phosphoserine; by PLK1" evidence="1">
    <location>
        <position position="483"/>
    </location>
</feature>
<feature type="modified residue" description="Phosphoserine; by PLK1" evidence="1">
    <location>
        <position position="487"/>
    </location>
</feature>
<feature type="modified residue" description="Phosphoserine; by PLK1" evidence="1">
    <location>
        <position position="491"/>
    </location>
</feature>
<protein>
    <recommendedName>
        <fullName>Serine/threonine-protein kinase 10</fullName>
        <ecNumber>2.7.11.1</ecNumber>
    </recommendedName>
</protein>
<proteinExistence type="evidence at transcript level"/>
<sequence length="951" mass="111828">MAFANFRRILRLPNFEKKRLREYEHVRRDLDPNQVWEIIGELGDGAFGKVYKAKNKETGILAAAKVIETKNEEELEDYMVEIEILATCNHHFIVKLLGSYYWEGKLWIMIEFCPGGAVDAIMLELDRGLKEPEIRTICRQMLEGLTYLHSMKMIHRDLKAGNVLLTLDGDIKLADFGVSAKNVKTLQRRDSFIGTPYWMAPEVVMCETMKDAPYDYKADIWSLGITLIEMAQIEPPHHELNPMRVLLKIAKSEPPTLSSPSKWSPEFHNFLKTALDKNPETRPSAAQLLEHPFVKKVSGNKPLRDLVAEAKAEVLDEIEENGEVEEEEASDTPSSNKSVSQSALGEKDKHTGKEHVGNGIKAEPQNTDSQADIHSQKRNHEGKNYPEHNRHDAVNGKPDIIILNPVSSNHEPKRNSAAESYRNEEHGSAVSSNQRPKSSQSDRQSVELVPNGSFDSPTRYFTGWSKRDSDSGSNSASESMDISMNLSADLSINKETGSLSLRESRLHKKTLKRTRRFVVDGVEVSITTSKIIGDDEKKDEEMRFLRRQELRELRLLQKEEHRNQAQLTSKHSFQMEQMLRRFEQEMNSKRKFYDSELEALERHQKQQIERMEQEHALRRRDEARRIRTEQERDHVKFLEQLKLRKKELKAQVEKLPRQQRRDAMKVQMDDFAQKKHIEEQQFLNKQKEDLTLALRVIVLENRKEIYNKEREFLNKKQQLLRDREAVIWDLEERHLQERHQLVKQQLKDQYFLQRHELLRKHEKEQEQMQRYNQRMMEQLKLRQQQERARLPKNQKAEAKTRMTMFKKSLHISPSGSAAEQREKIKQFSLQEEKRQKAERLQQQQKHEHQLLEMQAECDCNVRDLLQMQNEKCHLLVEHETQKLKTLDEHHIQMIREWRENLRPRKKALEDELEHKKEEQEMFFRMNEEVAGHPFPSNKPAKFYSFSSPEAS</sequence>
<name>STK10_XENTR</name>
<keyword id="KW-0067">ATP-binding</keyword>
<keyword id="KW-0131">Cell cycle</keyword>
<keyword id="KW-1003">Cell membrane</keyword>
<keyword id="KW-0175">Coiled coil</keyword>
<keyword id="KW-0418">Kinase</keyword>
<keyword id="KW-0472">Membrane</keyword>
<keyword id="KW-0547">Nucleotide-binding</keyword>
<keyword id="KW-0597">Phosphoprotein</keyword>
<keyword id="KW-1185">Reference proteome</keyword>
<keyword id="KW-0723">Serine/threonine-protein kinase</keyword>
<keyword id="KW-0808">Transferase</keyword>
<dbReference type="EC" id="2.7.11.1"/>
<dbReference type="EMBL" id="AAMC01112142">
    <property type="status" value="NOT_ANNOTATED_CDS"/>
    <property type="molecule type" value="Genomic_DNA"/>
</dbReference>
<dbReference type="EMBL" id="AAMC01112143">
    <property type="status" value="NOT_ANNOTATED_CDS"/>
    <property type="molecule type" value="Genomic_DNA"/>
</dbReference>
<dbReference type="EMBL" id="AAMC01112144">
    <property type="status" value="NOT_ANNOTATED_CDS"/>
    <property type="molecule type" value="Genomic_DNA"/>
</dbReference>
<dbReference type="EMBL" id="AAMC01112145">
    <property type="status" value="NOT_ANNOTATED_CDS"/>
    <property type="molecule type" value="Genomic_DNA"/>
</dbReference>
<dbReference type="EMBL" id="BC123019">
    <property type="protein sequence ID" value="AAI23020.1"/>
    <property type="molecule type" value="mRNA"/>
</dbReference>
<dbReference type="RefSeq" id="NP_001072623.1">
    <property type="nucleotide sequence ID" value="NM_001079155.1"/>
</dbReference>
<dbReference type="SMR" id="Q0IHQ8"/>
<dbReference type="FunCoup" id="Q0IHQ8">
    <property type="interactions" value="1595"/>
</dbReference>
<dbReference type="STRING" id="8364.ENSXETP00000040446"/>
<dbReference type="DNASU" id="780079"/>
<dbReference type="GeneID" id="780079"/>
<dbReference type="KEGG" id="xtr:780079"/>
<dbReference type="AGR" id="Xenbase:XB-GENE-494456"/>
<dbReference type="CTD" id="6793"/>
<dbReference type="Xenbase" id="XB-GENE-494456">
    <property type="gene designation" value="stk10"/>
</dbReference>
<dbReference type="eggNOG" id="KOG0579">
    <property type="taxonomic scope" value="Eukaryota"/>
</dbReference>
<dbReference type="InParanoid" id="Q0IHQ8"/>
<dbReference type="OMA" id="LATCNHH"/>
<dbReference type="OrthoDB" id="10027016at2759"/>
<dbReference type="Proteomes" id="UP000008143">
    <property type="component" value="Chromosome 3"/>
</dbReference>
<dbReference type="Bgee" id="ENSXETG00000014423">
    <property type="expression patterns" value="Expressed in liver and 14 other cell types or tissues"/>
</dbReference>
<dbReference type="GO" id="GO:0005886">
    <property type="term" value="C:plasma membrane"/>
    <property type="evidence" value="ECO:0000250"/>
    <property type="project" value="UniProtKB"/>
</dbReference>
<dbReference type="GO" id="GO:0005524">
    <property type="term" value="F:ATP binding"/>
    <property type="evidence" value="ECO:0007669"/>
    <property type="project" value="UniProtKB-KW"/>
</dbReference>
<dbReference type="GO" id="GO:0042803">
    <property type="term" value="F:protein homodimerization activity"/>
    <property type="evidence" value="ECO:0000250"/>
    <property type="project" value="UniProtKB"/>
</dbReference>
<dbReference type="GO" id="GO:0106310">
    <property type="term" value="F:protein serine kinase activity"/>
    <property type="evidence" value="ECO:0007669"/>
    <property type="project" value="RHEA"/>
</dbReference>
<dbReference type="GO" id="GO:0004674">
    <property type="term" value="F:protein serine/threonine kinase activity"/>
    <property type="evidence" value="ECO:0000250"/>
    <property type="project" value="UniProtKB"/>
</dbReference>
<dbReference type="GO" id="GO:0046777">
    <property type="term" value="P:protein autophosphorylation"/>
    <property type="evidence" value="ECO:0000250"/>
    <property type="project" value="UniProtKB"/>
</dbReference>
<dbReference type="GO" id="GO:2000401">
    <property type="term" value="P:regulation of lymphocyte migration"/>
    <property type="evidence" value="ECO:0000250"/>
    <property type="project" value="UniProtKB"/>
</dbReference>
<dbReference type="CDD" id="cd06644">
    <property type="entry name" value="STKc_STK10"/>
    <property type="match status" value="1"/>
</dbReference>
<dbReference type="FunFam" id="1.10.510.10:FF:000081">
    <property type="entry name" value="STE20-like serine/threonine-protein kinase"/>
    <property type="match status" value="1"/>
</dbReference>
<dbReference type="FunFam" id="3.30.200.20:FF:000120">
    <property type="entry name" value="STE20-like serine/threonine-protein kinase"/>
    <property type="match status" value="1"/>
</dbReference>
<dbReference type="Gene3D" id="3.30.200.20">
    <property type="entry name" value="Phosphorylase Kinase, domain 1"/>
    <property type="match status" value="1"/>
</dbReference>
<dbReference type="Gene3D" id="1.10.510.10">
    <property type="entry name" value="Transferase(Phosphotransferase) domain 1"/>
    <property type="match status" value="1"/>
</dbReference>
<dbReference type="InterPro" id="IPR011009">
    <property type="entry name" value="Kinase-like_dom_sf"/>
</dbReference>
<dbReference type="InterPro" id="IPR022165">
    <property type="entry name" value="PKK"/>
</dbReference>
<dbReference type="InterPro" id="IPR000719">
    <property type="entry name" value="Prot_kinase_dom"/>
</dbReference>
<dbReference type="InterPro" id="IPR017441">
    <property type="entry name" value="Protein_kinase_ATP_BS"/>
</dbReference>
<dbReference type="InterPro" id="IPR008271">
    <property type="entry name" value="Ser/Thr_kinase_AS"/>
</dbReference>
<dbReference type="InterPro" id="IPR051585">
    <property type="entry name" value="STE20_Ser/Thr_Kinases"/>
</dbReference>
<dbReference type="InterPro" id="IPR042743">
    <property type="entry name" value="STK10_STKc"/>
</dbReference>
<dbReference type="PANTHER" id="PTHR46538:SF2">
    <property type="entry name" value="NON-SPECIFIC SERINE_THREONINE PROTEIN KINASE"/>
    <property type="match status" value="1"/>
</dbReference>
<dbReference type="PANTHER" id="PTHR46538">
    <property type="entry name" value="PROTEIN KINASE DOMAIN-CONTAINING PROTEIN"/>
    <property type="match status" value="1"/>
</dbReference>
<dbReference type="Pfam" id="PF00069">
    <property type="entry name" value="Pkinase"/>
    <property type="match status" value="1"/>
</dbReference>
<dbReference type="Pfam" id="PF12474">
    <property type="entry name" value="PKK"/>
    <property type="match status" value="2"/>
</dbReference>
<dbReference type="SMART" id="SM00220">
    <property type="entry name" value="S_TKc"/>
    <property type="match status" value="1"/>
</dbReference>
<dbReference type="SUPFAM" id="SSF56112">
    <property type="entry name" value="Protein kinase-like (PK-like)"/>
    <property type="match status" value="1"/>
</dbReference>
<dbReference type="PROSITE" id="PS00107">
    <property type="entry name" value="PROTEIN_KINASE_ATP"/>
    <property type="match status" value="1"/>
</dbReference>
<dbReference type="PROSITE" id="PS50011">
    <property type="entry name" value="PROTEIN_KINASE_DOM"/>
    <property type="match status" value="1"/>
</dbReference>
<dbReference type="PROSITE" id="PS00108">
    <property type="entry name" value="PROTEIN_KINASE_ST"/>
    <property type="match status" value="1"/>
</dbReference>
<organism>
    <name type="scientific">Xenopus tropicalis</name>
    <name type="common">Western clawed frog</name>
    <name type="synonym">Silurana tropicalis</name>
    <dbReference type="NCBI Taxonomy" id="8364"/>
    <lineage>
        <taxon>Eukaryota</taxon>
        <taxon>Metazoa</taxon>
        <taxon>Chordata</taxon>
        <taxon>Craniata</taxon>
        <taxon>Vertebrata</taxon>
        <taxon>Euteleostomi</taxon>
        <taxon>Amphibia</taxon>
        <taxon>Batrachia</taxon>
        <taxon>Anura</taxon>
        <taxon>Pipoidea</taxon>
        <taxon>Pipidae</taxon>
        <taxon>Xenopodinae</taxon>
        <taxon>Xenopus</taxon>
        <taxon>Silurana</taxon>
    </lineage>
</organism>
<gene>
    <name type="primary">stk10</name>
</gene>
<evidence type="ECO:0000250" key="1"/>
<evidence type="ECO:0000255" key="2"/>
<evidence type="ECO:0000255" key="3">
    <source>
        <dbReference type="PROSITE-ProRule" id="PRU00159"/>
    </source>
</evidence>
<evidence type="ECO:0000255" key="4">
    <source>
        <dbReference type="PROSITE-ProRule" id="PRU10027"/>
    </source>
</evidence>
<evidence type="ECO:0000256" key="5">
    <source>
        <dbReference type="SAM" id="MobiDB-lite"/>
    </source>
</evidence>
<evidence type="ECO:0000305" key="6"/>
<accession>Q0IHQ8</accession>
<accession>F7A3L3</accession>
<comment type="function">
    <text evidence="1">May act as a polo kinase kinase by mediating phosphorylation of plk1/plx1 and subsequent activation of plk1/plx1 during oocyte maturation.</text>
</comment>
<comment type="catalytic activity">
    <reaction>
        <text>L-seryl-[protein] + ATP = O-phospho-L-seryl-[protein] + ADP + H(+)</text>
        <dbReference type="Rhea" id="RHEA:17989"/>
        <dbReference type="Rhea" id="RHEA-COMP:9863"/>
        <dbReference type="Rhea" id="RHEA-COMP:11604"/>
        <dbReference type="ChEBI" id="CHEBI:15378"/>
        <dbReference type="ChEBI" id="CHEBI:29999"/>
        <dbReference type="ChEBI" id="CHEBI:30616"/>
        <dbReference type="ChEBI" id="CHEBI:83421"/>
        <dbReference type="ChEBI" id="CHEBI:456216"/>
        <dbReference type="EC" id="2.7.11.1"/>
    </reaction>
</comment>
<comment type="catalytic activity">
    <reaction>
        <text>L-threonyl-[protein] + ATP = O-phospho-L-threonyl-[protein] + ADP + H(+)</text>
        <dbReference type="Rhea" id="RHEA:46608"/>
        <dbReference type="Rhea" id="RHEA-COMP:11060"/>
        <dbReference type="Rhea" id="RHEA-COMP:11605"/>
        <dbReference type="ChEBI" id="CHEBI:15378"/>
        <dbReference type="ChEBI" id="CHEBI:30013"/>
        <dbReference type="ChEBI" id="CHEBI:30616"/>
        <dbReference type="ChEBI" id="CHEBI:61977"/>
        <dbReference type="ChEBI" id="CHEBI:456216"/>
        <dbReference type="EC" id="2.7.11.1"/>
    </reaction>
</comment>
<comment type="subunit">
    <text evidence="1">Homodimer.</text>
</comment>
<comment type="subcellular location">
    <subcellularLocation>
        <location evidence="1">Cell membrane</location>
        <topology evidence="1">Peripheral membrane protein</topology>
    </subcellularLocation>
</comment>
<comment type="PTM">
    <text evidence="1">Autophosphorylates. Phosphorylated by plk1/plx1, suggesting the existence of a feedback loop with plk1/plx1. activation of the protein (By similarity).</text>
</comment>
<comment type="similarity">
    <text evidence="6">Belongs to the protein kinase superfamily. STE Ser/Thr protein kinase family. STE20 subfamily.</text>
</comment>